<keyword id="KW-0027">Amidation</keyword>
<keyword id="KW-0903">Direct protein sequencing</keyword>
<keyword id="KW-0527">Neuropeptide</keyword>
<keyword id="KW-0964">Secreted</keyword>
<name>PVK2_PERVR</name>
<proteinExistence type="evidence at protein level"/>
<comment type="function">
    <text evidence="4">Mediates visceral muscle contractile activity (myotropic activity).</text>
</comment>
<comment type="subcellular location">
    <subcellularLocation>
        <location evidence="4">Secreted</location>
    </subcellularLocation>
</comment>
<comment type="similarity">
    <text evidence="1">Belongs to the periviscerokinin family.</text>
</comment>
<protein>
    <recommendedName>
        <fullName evidence="3">Periviscerokinin-2</fullName>
        <shortName evidence="3">PerVi-PVK-2</shortName>
    </recommendedName>
</protein>
<sequence length="11" mass="1103">GSSGLISMPRV</sequence>
<feature type="peptide" id="PRO_0000378807" description="Periviscerokinin-2" evidence="2">
    <location>
        <begin position="1"/>
        <end position="11"/>
    </location>
</feature>
<feature type="modified residue" description="Valine amide" evidence="2">
    <location>
        <position position="11"/>
    </location>
</feature>
<reference evidence="4" key="1">
    <citation type="journal article" date="2009" name="BMC Evol. Biol.">
        <title>A proteomic approach for studying insect phylogeny: CAPA peptides of ancient insect taxa (Dictyoptera, Blattoptera) as a test case.</title>
        <authorList>
            <person name="Roth S."/>
            <person name="Fromm B."/>
            <person name="Gaede G."/>
            <person name="Predel R."/>
        </authorList>
    </citation>
    <scope>PROTEIN SEQUENCE</scope>
    <scope>AMIDATION AT VAL-11</scope>
    <source>
        <tissue evidence="2">Abdominal perisympathetic organs</tissue>
    </source>
</reference>
<evidence type="ECO:0000255" key="1"/>
<evidence type="ECO:0000269" key="2">
    <source>
    </source>
</evidence>
<evidence type="ECO:0000303" key="3">
    <source>
    </source>
</evidence>
<evidence type="ECO:0000305" key="4"/>
<dbReference type="GO" id="GO:0005576">
    <property type="term" value="C:extracellular region"/>
    <property type="evidence" value="ECO:0007669"/>
    <property type="project" value="UniProtKB-SubCell"/>
</dbReference>
<dbReference type="GO" id="GO:0007218">
    <property type="term" value="P:neuropeptide signaling pathway"/>
    <property type="evidence" value="ECO:0007669"/>
    <property type="project" value="UniProtKB-KW"/>
</dbReference>
<dbReference type="InterPro" id="IPR013231">
    <property type="entry name" value="Periviscerokinin"/>
</dbReference>
<dbReference type="Pfam" id="PF08259">
    <property type="entry name" value="Periviscerokin"/>
    <property type="match status" value="1"/>
</dbReference>
<organism>
    <name type="scientific">Perisphaeria virescens</name>
    <name type="common">Cockroach</name>
    <dbReference type="NCBI Taxonomy" id="344690"/>
    <lineage>
        <taxon>Eukaryota</taxon>
        <taxon>Metazoa</taxon>
        <taxon>Ecdysozoa</taxon>
        <taxon>Arthropoda</taxon>
        <taxon>Hexapoda</taxon>
        <taxon>Insecta</taxon>
        <taxon>Pterygota</taxon>
        <taxon>Neoptera</taxon>
        <taxon>Polyneoptera</taxon>
        <taxon>Dictyoptera</taxon>
        <taxon>Blattodea</taxon>
        <taxon>Blaberoidea</taxon>
        <taxon>Blaberidae</taxon>
        <taxon>Perisphaerinae</taxon>
        <taxon>Perisphaeria</taxon>
    </lineage>
</organism>
<accession>P85731</accession>